<gene>
    <name evidence="1" type="primary">recA</name>
    <name type="ordered locus">Daci_0874</name>
</gene>
<keyword id="KW-0067">ATP-binding</keyword>
<keyword id="KW-0963">Cytoplasm</keyword>
<keyword id="KW-0227">DNA damage</keyword>
<keyword id="KW-0233">DNA recombination</keyword>
<keyword id="KW-0234">DNA repair</keyword>
<keyword id="KW-0238">DNA-binding</keyword>
<keyword id="KW-0547">Nucleotide-binding</keyword>
<keyword id="KW-1185">Reference proteome</keyword>
<keyword id="KW-0742">SOS response</keyword>
<organism>
    <name type="scientific">Delftia acidovorans (strain DSM 14801 / SPH-1)</name>
    <dbReference type="NCBI Taxonomy" id="398578"/>
    <lineage>
        <taxon>Bacteria</taxon>
        <taxon>Pseudomonadati</taxon>
        <taxon>Pseudomonadota</taxon>
        <taxon>Betaproteobacteria</taxon>
        <taxon>Burkholderiales</taxon>
        <taxon>Comamonadaceae</taxon>
        <taxon>Delftia</taxon>
    </lineage>
</organism>
<comment type="function">
    <text evidence="1">Can catalyze the hydrolysis of ATP in the presence of single-stranded DNA, the ATP-dependent uptake of single-stranded DNA by duplex DNA, and the ATP-dependent hybridization of homologous single-stranded DNAs. It interacts with LexA causing its activation and leading to its autocatalytic cleavage.</text>
</comment>
<comment type="subcellular location">
    <subcellularLocation>
        <location evidence="1">Cytoplasm</location>
    </subcellularLocation>
</comment>
<comment type="similarity">
    <text evidence="1">Belongs to the RecA family.</text>
</comment>
<dbReference type="EMBL" id="CP000884">
    <property type="protein sequence ID" value="ABX33520.1"/>
    <property type="molecule type" value="Genomic_DNA"/>
</dbReference>
<dbReference type="RefSeq" id="WP_012202806.1">
    <property type="nucleotide sequence ID" value="NC_010002.1"/>
</dbReference>
<dbReference type="SMR" id="A9BQB0"/>
<dbReference type="STRING" id="398578.Daci_0874"/>
<dbReference type="GeneID" id="24118888"/>
<dbReference type="KEGG" id="dac:Daci_0874"/>
<dbReference type="eggNOG" id="COG0468">
    <property type="taxonomic scope" value="Bacteria"/>
</dbReference>
<dbReference type="HOGENOM" id="CLU_040469_3_2_4"/>
<dbReference type="Proteomes" id="UP000000784">
    <property type="component" value="Chromosome"/>
</dbReference>
<dbReference type="GO" id="GO:0005829">
    <property type="term" value="C:cytosol"/>
    <property type="evidence" value="ECO:0007669"/>
    <property type="project" value="TreeGrafter"/>
</dbReference>
<dbReference type="GO" id="GO:0005524">
    <property type="term" value="F:ATP binding"/>
    <property type="evidence" value="ECO:0007669"/>
    <property type="project" value="UniProtKB-UniRule"/>
</dbReference>
<dbReference type="GO" id="GO:0016887">
    <property type="term" value="F:ATP hydrolysis activity"/>
    <property type="evidence" value="ECO:0007669"/>
    <property type="project" value="InterPro"/>
</dbReference>
<dbReference type="GO" id="GO:0140664">
    <property type="term" value="F:ATP-dependent DNA damage sensor activity"/>
    <property type="evidence" value="ECO:0007669"/>
    <property type="project" value="InterPro"/>
</dbReference>
<dbReference type="GO" id="GO:0003684">
    <property type="term" value="F:damaged DNA binding"/>
    <property type="evidence" value="ECO:0007669"/>
    <property type="project" value="UniProtKB-UniRule"/>
</dbReference>
<dbReference type="GO" id="GO:0003697">
    <property type="term" value="F:single-stranded DNA binding"/>
    <property type="evidence" value="ECO:0007669"/>
    <property type="project" value="UniProtKB-UniRule"/>
</dbReference>
<dbReference type="GO" id="GO:0006310">
    <property type="term" value="P:DNA recombination"/>
    <property type="evidence" value="ECO:0007669"/>
    <property type="project" value="UniProtKB-UniRule"/>
</dbReference>
<dbReference type="GO" id="GO:0006281">
    <property type="term" value="P:DNA repair"/>
    <property type="evidence" value="ECO:0007669"/>
    <property type="project" value="UniProtKB-UniRule"/>
</dbReference>
<dbReference type="GO" id="GO:0009432">
    <property type="term" value="P:SOS response"/>
    <property type="evidence" value="ECO:0007669"/>
    <property type="project" value="UniProtKB-UniRule"/>
</dbReference>
<dbReference type="CDD" id="cd00983">
    <property type="entry name" value="RecA"/>
    <property type="match status" value="1"/>
</dbReference>
<dbReference type="FunFam" id="3.40.50.300:FF:000087">
    <property type="entry name" value="Recombinase RecA"/>
    <property type="match status" value="1"/>
</dbReference>
<dbReference type="Gene3D" id="3.40.50.300">
    <property type="entry name" value="P-loop containing nucleotide triphosphate hydrolases"/>
    <property type="match status" value="1"/>
</dbReference>
<dbReference type="HAMAP" id="MF_00268">
    <property type="entry name" value="RecA"/>
    <property type="match status" value="1"/>
</dbReference>
<dbReference type="InterPro" id="IPR003593">
    <property type="entry name" value="AAA+_ATPase"/>
</dbReference>
<dbReference type="InterPro" id="IPR013765">
    <property type="entry name" value="DNA_recomb/repair_RecA"/>
</dbReference>
<dbReference type="InterPro" id="IPR020584">
    <property type="entry name" value="DNA_recomb/repair_RecA_CS"/>
</dbReference>
<dbReference type="InterPro" id="IPR027417">
    <property type="entry name" value="P-loop_NTPase"/>
</dbReference>
<dbReference type="InterPro" id="IPR049261">
    <property type="entry name" value="RecA-like_C"/>
</dbReference>
<dbReference type="InterPro" id="IPR049428">
    <property type="entry name" value="RecA-like_N"/>
</dbReference>
<dbReference type="InterPro" id="IPR020588">
    <property type="entry name" value="RecA_ATP-bd"/>
</dbReference>
<dbReference type="InterPro" id="IPR023400">
    <property type="entry name" value="RecA_C_sf"/>
</dbReference>
<dbReference type="InterPro" id="IPR020587">
    <property type="entry name" value="RecA_monomer-monomer_interface"/>
</dbReference>
<dbReference type="NCBIfam" id="TIGR02012">
    <property type="entry name" value="tigrfam_recA"/>
    <property type="match status" value="1"/>
</dbReference>
<dbReference type="PANTHER" id="PTHR45900:SF1">
    <property type="entry name" value="MITOCHONDRIAL DNA REPAIR PROTEIN RECA HOMOLOG-RELATED"/>
    <property type="match status" value="1"/>
</dbReference>
<dbReference type="PANTHER" id="PTHR45900">
    <property type="entry name" value="RECA"/>
    <property type="match status" value="1"/>
</dbReference>
<dbReference type="Pfam" id="PF00154">
    <property type="entry name" value="RecA"/>
    <property type="match status" value="1"/>
</dbReference>
<dbReference type="Pfam" id="PF21096">
    <property type="entry name" value="RecA_C"/>
    <property type="match status" value="1"/>
</dbReference>
<dbReference type="PRINTS" id="PR00142">
    <property type="entry name" value="RECA"/>
</dbReference>
<dbReference type="SMART" id="SM00382">
    <property type="entry name" value="AAA"/>
    <property type="match status" value="1"/>
</dbReference>
<dbReference type="SUPFAM" id="SSF52540">
    <property type="entry name" value="P-loop containing nucleoside triphosphate hydrolases"/>
    <property type="match status" value="1"/>
</dbReference>
<dbReference type="SUPFAM" id="SSF54752">
    <property type="entry name" value="RecA protein, C-terminal domain"/>
    <property type="match status" value="1"/>
</dbReference>
<dbReference type="PROSITE" id="PS00321">
    <property type="entry name" value="RECA_1"/>
    <property type="match status" value="1"/>
</dbReference>
<dbReference type="PROSITE" id="PS50162">
    <property type="entry name" value="RECA_2"/>
    <property type="match status" value="1"/>
</dbReference>
<dbReference type="PROSITE" id="PS50163">
    <property type="entry name" value="RECA_3"/>
    <property type="match status" value="1"/>
</dbReference>
<protein>
    <recommendedName>
        <fullName evidence="1">Protein RecA</fullName>
    </recommendedName>
    <alternativeName>
        <fullName evidence="1">Recombinase A</fullName>
    </alternativeName>
</protein>
<proteinExistence type="inferred from homology"/>
<accession>A9BQB0</accession>
<name>RECA_DELAS</name>
<feature type="chain" id="PRO_1000114330" description="Protein RecA">
    <location>
        <begin position="1"/>
        <end position="367"/>
    </location>
</feature>
<feature type="binding site" evidence="1">
    <location>
        <begin position="73"/>
        <end position="80"/>
    </location>
    <ligand>
        <name>ATP</name>
        <dbReference type="ChEBI" id="CHEBI:30616"/>
    </ligand>
</feature>
<sequence length="367" mass="38923">MNTAVTTANSEKAKALQAALAQIEKQFGKGTIMRLGEGEAIQDIQVVSTGSLGLDIALGVGGLPRGRVIEIYGPESSGKTTLTLQVIAEMQKQGGTCAFIDAEHALDTSYAQKLGVNLNEVLISQPDTGEQALEIVDSLVRSGAVDMIVVDSVAALTPRAEIEGEMGDQLPGLQARLMSQALRKLTATIKKTNCMVIFINQIRMKIGVMFGSPETTTGGNALKFYASVRLDIRRTGTIKKGDEAIGNETKVKVVKNKVSPPFKTAEFDILFGEGISREGEILDMGVNAKILDKSGAWYAYNGEKIGQGRDNAREFLRENSGLAVEIENKVRDSLGIALLPTAGGDAPEAKAAKAGKAKADKDGVIEA</sequence>
<evidence type="ECO:0000255" key="1">
    <source>
        <dbReference type="HAMAP-Rule" id="MF_00268"/>
    </source>
</evidence>
<reference key="1">
    <citation type="submission" date="2007-11" db="EMBL/GenBank/DDBJ databases">
        <title>Complete sequence of Delftia acidovorans DSM 14801 / SPH-1.</title>
        <authorList>
            <person name="Copeland A."/>
            <person name="Lucas S."/>
            <person name="Lapidus A."/>
            <person name="Barry K."/>
            <person name="Glavina del Rio T."/>
            <person name="Dalin E."/>
            <person name="Tice H."/>
            <person name="Pitluck S."/>
            <person name="Lowry S."/>
            <person name="Clum A."/>
            <person name="Schmutz J."/>
            <person name="Larimer F."/>
            <person name="Land M."/>
            <person name="Hauser L."/>
            <person name="Kyrpides N."/>
            <person name="Kim E."/>
            <person name="Schleheck D."/>
            <person name="Richardson P."/>
        </authorList>
    </citation>
    <scope>NUCLEOTIDE SEQUENCE [LARGE SCALE GENOMIC DNA]</scope>
    <source>
        <strain>DSM 14801 / SPH-1</strain>
    </source>
</reference>